<organism>
    <name type="scientific">Danio rerio</name>
    <name type="common">Zebrafish</name>
    <name type="synonym">Brachydanio rerio</name>
    <dbReference type="NCBI Taxonomy" id="7955"/>
    <lineage>
        <taxon>Eukaryota</taxon>
        <taxon>Metazoa</taxon>
        <taxon>Chordata</taxon>
        <taxon>Craniata</taxon>
        <taxon>Vertebrata</taxon>
        <taxon>Euteleostomi</taxon>
        <taxon>Actinopterygii</taxon>
        <taxon>Neopterygii</taxon>
        <taxon>Teleostei</taxon>
        <taxon>Ostariophysi</taxon>
        <taxon>Cypriniformes</taxon>
        <taxon>Danionidae</taxon>
        <taxon>Danioninae</taxon>
        <taxon>Danio</taxon>
    </lineage>
</organism>
<accession>A5PN28</accession>
<accession>Q60HI2</accession>
<gene>
    <name type="primary">otol1a</name>
    <name type="synonym">otol1</name>
    <name type="ORF">si:dkey-119f1.2</name>
</gene>
<proteinExistence type="evidence at protein level"/>
<sequence length="489" mass="50792">MPNILHPFIIIMTLLVVATGNQASIDKTTQWPRMKPTKKPPPRDEGPSKLGSISTTVSPTAIGITEEVTDAMMDAYTITSTGSTTFSSDTYSADYHTEAMVPPGVGPGNYTLDYNECFFNFCECCPPERGPPGPVGEKGLPGIPGGKGEMGPPGPPGQEGLTGAPGTHGVKGEKGDTGASGLPGIPGVTGKQGEKGESGPKGDKGDTGFPGLKGDPGERGEPGWNGTKGGMGEPGKQGLTGPPGPDGIKGEKGDKGDCPFGEKGQKGSIGEPGPQGPKGDPGVPGTNGTDGLPGSKGPKGDPGPLSKQGEPGPPGPQGPPGQRGMPGMKGTRGLKGARGIRGFKGFKGEPAVQKRSAFSVGLFPSRSFPPPGLPIRFDKIIYNEEAHWDPNASKFNCTHGGVYVFSYYITVRNRPLRAALVVNGIRKLRTRDSLYGQDIDQASNMAVLRLSSGDQVWLETLRDWNGVYSSSEDDSTFSGFLLYADATKD</sequence>
<name>OTO1A_DANRE</name>
<comment type="function">
    <text evidence="6 7">Collagen-like protein, which provides an organic scaffold for otoliths onto the sensory epithelium of the inner ear (PubMed:15905077, PubMed:29076638). Acts as a scaffold for biomineralization by sequestering calcium (PubMed:29076638).</text>
</comment>
<comment type="subunit">
    <text evidence="1 7">Homooligomer; disulfide-linked; probably forms homotrimers (PubMed:29076638). Interacts with otomp (By similarity).</text>
</comment>
<comment type="subcellular location">
    <subcellularLocation>
        <location evidence="2">Secreted</location>
        <location evidence="2">Extracellular space</location>
        <location evidence="2">Extracellular matrix</location>
    </subcellularLocation>
    <text evidence="2">Localized in both the surrounding otoconial matrix and otoconia.</text>
</comment>
<comment type="domain">
    <text evidence="7">The C1q domain mediates calcium-binding.</text>
</comment>
<comment type="similarity">
    <text evidence="9">Belongs to the OTOL1 family.</text>
</comment>
<comment type="sequence caution" evidence="9">
    <conflict type="frameshift">
        <sequence resource="EMBL-CDS" id="BAD61006"/>
    </conflict>
</comment>
<protein>
    <recommendedName>
        <fullName evidence="9">Otolin-1-A</fullName>
    </recommendedName>
    <alternativeName>
        <fullName evidence="8">zOtolin1</fullName>
    </alternativeName>
</protein>
<feature type="signal peptide" evidence="3">
    <location>
        <begin position="1"/>
        <end position="23"/>
    </location>
</feature>
<feature type="chain" id="PRO_0000332217" description="Otolin-1-A">
    <location>
        <begin position="24"/>
        <end position="489"/>
    </location>
</feature>
<feature type="domain" description="Collagen-like 1">
    <location>
        <begin position="145"/>
        <end position="204"/>
    </location>
</feature>
<feature type="domain" description="Collagen-like 2">
    <location>
        <begin position="205"/>
        <end position="255"/>
    </location>
</feature>
<feature type="domain" description="Collagen-like 3">
    <location>
        <begin position="264"/>
        <end position="323"/>
    </location>
</feature>
<feature type="domain" description="C1q" evidence="4">
    <location>
        <begin position="351"/>
        <end position="488"/>
    </location>
</feature>
<feature type="region of interest" description="Disordered" evidence="5">
    <location>
        <begin position="27"/>
        <end position="57"/>
    </location>
</feature>
<feature type="region of interest" description="Disordered" evidence="5">
    <location>
        <begin position="133"/>
        <end position="335"/>
    </location>
</feature>
<feature type="compositionally biased region" description="Gly residues" evidence="5">
    <location>
        <begin position="142"/>
        <end position="151"/>
    </location>
</feature>
<feature type="compositionally biased region" description="Basic and acidic residues" evidence="5">
    <location>
        <begin position="192"/>
        <end position="206"/>
    </location>
</feature>
<feature type="compositionally biased region" description="Gly residues" evidence="5">
    <location>
        <begin position="226"/>
        <end position="235"/>
    </location>
</feature>
<feature type="compositionally biased region" description="Basic and acidic residues" evidence="5">
    <location>
        <begin position="248"/>
        <end position="257"/>
    </location>
</feature>
<feature type="compositionally biased region" description="Low complexity" evidence="5">
    <location>
        <begin position="290"/>
        <end position="310"/>
    </location>
</feature>
<feature type="glycosylation site" description="N-linked (GlcNAc...) asparagine" evidence="3">
    <location>
        <position position="109"/>
    </location>
</feature>
<feature type="glycosylation site" description="N-linked (GlcNAc...) asparagine" evidence="3">
    <location>
        <position position="225"/>
    </location>
</feature>
<feature type="glycosylation site" description="N-linked (GlcNAc...) asparagine" evidence="3">
    <location>
        <position position="287"/>
    </location>
</feature>
<feature type="glycosylation site" description="N-linked (GlcNAc...) asparagine" evidence="3">
    <location>
        <position position="391"/>
    </location>
</feature>
<feature type="glycosylation site" description="N-linked (GlcNAc...) asparagine" evidence="3">
    <location>
        <position position="396"/>
    </location>
</feature>
<feature type="sequence conflict" description="In Ref. 2; BAD61006." evidence="9" ref="2">
    <original>II</original>
    <variation>ML</variation>
    <location>
        <begin position="10"/>
        <end position="11"/>
    </location>
</feature>
<feature type="sequence conflict" description="In Ref. 2; BAD61006." evidence="9" ref="2">
    <original>D</original>
    <variation>A</variation>
    <location>
        <position position="26"/>
    </location>
</feature>
<feature type="sequence conflict" description="In Ref. 2; BAD61006." evidence="9" ref="2">
    <original>S</original>
    <variation>P</variation>
    <location>
        <position position="48"/>
    </location>
</feature>
<feature type="sequence conflict" description="In Ref. 2; BAD61006." evidence="9" ref="2">
    <original>D</original>
    <variation>G</variation>
    <location>
        <position position="70"/>
    </location>
</feature>
<feature type="sequence conflict" description="In Ref. 2; BAD61006." evidence="9" ref="2">
    <original>GS</original>
    <variation>DC</variation>
    <location>
        <begin position="82"/>
        <end position="83"/>
    </location>
</feature>
<feature type="sequence conflict" description="In Ref. 2; BAD61006." evidence="9" ref="2">
    <original>F</original>
    <variation>L</variation>
    <location>
        <position position="118"/>
    </location>
</feature>
<feature type="sequence conflict" description="In Ref. 2; BAD61006." evidence="9" ref="2">
    <original>T</original>
    <variation>P</variation>
    <location>
        <position position="167"/>
    </location>
</feature>
<feature type="sequence conflict" description="In Ref. 2; BAD61006." evidence="9" ref="2">
    <original>I</original>
    <variation>F</variation>
    <location>
        <position position="185"/>
    </location>
</feature>
<feature type="sequence conflict" description="In Ref. 2; BAD61006." evidence="9" ref="2">
    <original>G</original>
    <variation>D</variation>
    <location>
        <position position="315"/>
    </location>
</feature>
<evidence type="ECO:0000250" key="1">
    <source>
        <dbReference type="UniProtKB" id="A0A060WQA3"/>
    </source>
</evidence>
<evidence type="ECO:0000250" key="2">
    <source>
        <dbReference type="UniProtKB" id="Q4ZJM7"/>
    </source>
</evidence>
<evidence type="ECO:0000255" key="3"/>
<evidence type="ECO:0000255" key="4">
    <source>
        <dbReference type="PROSITE-ProRule" id="PRU00368"/>
    </source>
</evidence>
<evidence type="ECO:0000256" key="5">
    <source>
        <dbReference type="SAM" id="MobiDB-lite"/>
    </source>
</evidence>
<evidence type="ECO:0000269" key="6">
    <source>
    </source>
</evidence>
<evidence type="ECO:0000269" key="7">
    <source>
    </source>
</evidence>
<evidence type="ECO:0000303" key="8">
    <source>
    </source>
</evidence>
<evidence type="ECO:0000305" key="9"/>
<dbReference type="EMBL" id="BX927289">
    <property type="protein sequence ID" value="CAN88052.1"/>
    <property type="molecule type" value="Genomic_DNA"/>
</dbReference>
<dbReference type="EMBL" id="AB124554">
    <property type="protein sequence ID" value="BAD61006.1"/>
    <property type="status" value="ALT_FRAME"/>
    <property type="molecule type" value="mRNA"/>
</dbReference>
<dbReference type="RefSeq" id="NP_001093211.1">
    <property type="nucleotide sequence ID" value="NM_001099741.1"/>
</dbReference>
<dbReference type="SMR" id="A5PN28"/>
<dbReference type="STRING" id="7955.ENSDARP00000116485"/>
<dbReference type="GlyCosmos" id="A5PN28">
    <property type="glycosylation" value="5 sites, No reported glycans"/>
</dbReference>
<dbReference type="PaxDb" id="7955-ENSDARP00000116485"/>
<dbReference type="Ensembl" id="ENSDART00000132859">
    <property type="protein sequence ID" value="ENSDARP00000116485"/>
    <property type="gene ID" value="ENSDARG00000001771"/>
</dbReference>
<dbReference type="GeneID" id="553759"/>
<dbReference type="KEGG" id="dre:553759"/>
<dbReference type="AGR" id="ZFIN:ZDB-GENE-050707-1"/>
<dbReference type="CTD" id="553759"/>
<dbReference type="ZFIN" id="ZDB-GENE-050707-1">
    <property type="gene designation" value="otol1a"/>
</dbReference>
<dbReference type="eggNOG" id="ENOG502QRPC">
    <property type="taxonomic scope" value="Eukaryota"/>
</dbReference>
<dbReference type="HOGENOM" id="CLU_001074_0_0_1"/>
<dbReference type="InParanoid" id="A5PN28"/>
<dbReference type="OMA" id="KGYCGES"/>
<dbReference type="OrthoDB" id="9948489at2759"/>
<dbReference type="PhylomeDB" id="A5PN28"/>
<dbReference type="TreeFam" id="TF334029"/>
<dbReference type="PRO" id="PR:A5PN28"/>
<dbReference type="Proteomes" id="UP000000437">
    <property type="component" value="Chromosome 2"/>
</dbReference>
<dbReference type="Bgee" id="ENSDARG00000001771">
    <property type="expression patterns" value="Expressed in ectoderm and 1 other cell type or tissue"/>
</dbReference>
<dbReference type="GO" id="GO:0005581">
    <property type="term" value="C:collagen trimer"/>
    <property type="evidence" value="ECO:0007669"/>
    <property type="project" value="UniProtKB-KW"/>
</dbReference>
<dbReference type="GO" id="GO:0062023">
    <property type="term" value="C:collagen-containing extracellular matrix"/>
    <property type="evidence" value="ECO:0000318"/>
    <property type="project" value="GO_Central"/>
</dbReference>
<dbReference type="GO" id="GO:0005615">
    <property type="term" value="C:extracellular space"/>
    <property type="evidence" value="ECO:0000318"/>
    <property type="project" value="GO_Central"/>
</dbReference>
<dbReference type="GO" id="GO:0005509">
    <property type="term" value="F:calcium ion binding"/>
    <property type="evidence" value="ECO:0000314"/>
    <property type="project" value="UniProtKB"/>
</dbReference>
<dbReference type="GO" id="GO:0030020">
    <property type="term" value="F:extracellular matrix structural constituent conferring tensile strength"/>
    <property type="evidence" value="ECO:0000318"/>
    <property type="project" value="GO_Central"/>
</dbReference>
<dbReference type="GO" id="GO:0031214">
    <property type="term" value="P:biomineral tissue development"/>
    <property type="evidence" value="ECO:0000314"/>
    <property type="project" value="ZFIN"/>
</dbReference>
<dbReference type="GO" id="GO:0048840">
    <property type="term" value="P:otolith development"/>
    <property type="evidence" value="ECO:0000315"/>
    <property type="project" value="ZFIN"/>
</dbReference>
<dbReference type="GO" id="GO:0045299">
    <property type="term" value="P:otolith mineralization"/>
    <property type="evidence" value="ECO:0000314"/>
    <property type="project" value="UniProtKB"/>
</dbReference>
<dbReference type="GO" id="GO:0051259">
    <property type="term" value="P:protein complex oligomerization"/>
    <property type="evidence" value="ECO:0000314"/>
    <property type="project" value="ZFIN"/>
</dbReference>
<dbReference type="FunFam" id="2.60.120.40:FF:000001">
    <property type="entry name" value="Complement C1q B chain"/>
    <property type="match status" value="1"/>
</dbReference>
<dbReference type="Gene3D" id="2.60.120.40">
    <property type="match status" value="1"/>
</dbReference>
<dbReference type="InterPro" id="IPR001073">
    <property type="entry name" value="C1q_dom"/>
</dbReference>
<dbReference type="InterPro" id="IPR008160">
    <property type="entry name" value="Collagen"/>
</dbReference>
<dbReference type="InterPro" id="IPR050392">
    <property type="entry name" value="Collagen/C1q_domain"/>
</dbReference>
<dbReference type="InterPro" id="IPR008983">
    <property type="entry name" value="Tumour_necrosis_fac-like_dom"/>
</dbReference>
<dbReference type="PANTHER" id="PTHR15427:SF33">
    <property type="entry name" value="COLLAGEN IV NC1 DOMAIN-CONTAINING PROTEIN"/>
    <property type="match status" value="1"/>
</dbReference>
<dbReference type="PANTHER" id="PTHR15427">
    <property type="entry name" value="EMILIN ELASTIN MICROFIBRIL INTERFACE-LOCATED PROTEIN ELASTIN MICROFIBRIL INTERFACER"/>
    <property type="match status" value="1"/>
</dbReference>
<dbReference type="Pfam" id="PF00386">
    <property type="entry name" value="C1q"/>
    <property type="match status" value="1"/>
</dbReference>
<dbReference type="Pfam" id="PF01391">
    <property type="entry name" value="Collagen"/>
    <property type="match status" value="3"/>
</dbReference>
<dbReference type="PRINTS" id="PR00007">
    <property type="entry name" value="COMPLEMNTC1Q"/>
</dbReference>
<dbReference type="SMART" id="SM00110">
    <property type="entry name" value="C1Q"/>
    <property type="match status" value="1"/>
</dbReference>
<dbReference type="SUPFAM" id="SSF49842">
    <property type="entry name" value="TNF-like"/>
    <property type="match status" value="1"/>
</dbReference>
<dbReference type="PROSITE" id="PS50871">
    <property type="entry name" value="C1Q"/>
    <property type="match status" value="1"/>
</dbReference>
<reference key="1">
    <citation type="journal article" date="2013" name="Nature">
        <title>The zebrafish reference genome sequence and its relationship to the human genome.</title>
        <authorList>
            <person name="Howe K."/>
            <person name="Clark M.D."/>
            <person name="Torroja C.F."/>
            <person name="Torrance J."/>
            <person name="Berthelot C."/>
            <person name="Muffato M."/>
            <person name="Collins J.E."/>
            <person name="Humphray S."/>
            <person name="McLaren K."/>
            <person name="Matthews L."/>
            <person name="McLaren S."/>
            <person name="Sealy I."/>
            <person name="Caccamo M."/>
            <person name="Churcher C."/>
            <person name="Scott C."/>
            <person name="Barrett J.C."/>
            <person name="Koch R."/>
            <person name="Rauch G.J."/>
            <person name="White S."/>
            <person name="Chow W."/>
            <person name="Kilian B."/>
            <person name="Quintais L.T."/>
            <person name="Guerra-Assuncao J.A."/>
            <person name="Zhou Y."/>
            <person name="Gu Y."/>
            <person name="Yen J."/>
            <person name="Vogel J.H."/>
            <person name="Eyre T."/>
            <person name="Redmond S."/>
            <person name="Banerjee R."/>
            <person name="Chi J."/>
            <person name="Fu B."/>
            <person name="Langley E."/>
            <person name="Maguire S.F."/>
            <person name="Laird G.K."/>
            <person name="Lloyd D."/>
            <person name="Kenyon E."/>
            <person name="Donaldson S."/>
            <person name="Sehra H."/>
            <person name="Almeida-King J."/>
            <person name="Loveland J."/>
            <person name="Trevanion S."/>
            <person name="Jones M."/>
            <person name="Quail M."/>
            <person name="Willey D."/>
            <person name="Hunt A."/>
            <person name="Burton J."/>
            <person name="Sims S."/>
            <person name="McLay K."/>
            <person name="Plumb B."/>
            <person name="Davis J."/>
            <person name="Clee C."/>
            <person name="Oliver K."/>
            <person name="Clark R."/>
            <person name="Riddle C."/>
            <person name="Elliot D."/>
            <person name="Threadgold G."/>
            <person name="Harden G."/>
            <person name="Ware D."/>
            <person name="Begum S."/>
            <person name="Mortimore B."/>
            <person name="Kerry G."/>
            <person name="Heath P."/>
            <person name="Phillimore B."/>
            <person name="Tracey A."/>
            <person name="Corby N."/>
            <person name="Dunn M."/>
            <person name="Johnson C."/>
            <person name="Wood J."/>
            <person name="Clark S."/>
            <person name="Pelan S."/>
            <person name="Griffiths G."/>
            <person name="Smith M."/>
            <person name="Glithero R."/>
            <person name="Howden P."/>
            <person name="Barker N."/>
            <person name="Lloyd C."/>
            <person name="Stevens C."/>
            <person name="Harley J."/>
            <person name="Holt K."/>
            <person name="Panagiotidis G."/>
            <person name="Lovell J."/>
            <person name="Beasley H."/>
            <person name="Henderson C."/>
            <person name="Gordon D."/>
            <person name="Auger K."/>
            <person name="Wright D."/>
            <person name="Collins J."/>
            <person name="Raisen C."/>
            <person name="Dyer L."/>
            <person name="Leung K."/>
            <person name="Robertson L."/>
            <person name="Ambridge K."/>
            <person name="Leongamornlert D."/>
            <person name="McGuire S."/>
            <person name="Gilderthorp R."/>
            <person name="Griffiths C."/>
            <person name="Manthravadi D."/>
            <person name="Nichol S."/>
            <person name="Barker G."/>
            <person name="Whitehead S."/>
            <person name="Kay M."/>
            <person name="Brown J."/>
            <person name="Murnane C."/>
            <person name="Gray E."/>
            <person name="Humphries M."/>
            <person name="Sycamore N."/>
            <person name="Barker D."/>
            <person name="Saunders D."/>
            <person name="Wallis J."/>
            <person name="Babbage A."/>
            <person name="Hammond S."/>
            <person name="Mashreghi-Mohammadi M."/>
            <person name="Barr L."/>
            <person name="Martin S."/>
            <person name="Wray P."/>
            <person name="Ellington A."/>
            <person name="Matthews N."/>
            <person name="Ellwood M."/>
            <person name="Woodmansey R."/>
            <person name="Clark G."/>
            <person name="Cooper J."/>
            <person name="Tromans A."/>
            <person name="Grafham D."/>
            <person name="Skuce C."/>
            <person name="Pandian R."/>
            <person name="Andrews R."/>
            <person name="Harrison E."/>
            <person name="Kimberley A."/>
            <person name="Garnett J."/>
            <person name="Fosker N."/>
            <person name="Hall R."/>
            <person name="Garner P."/>
            <person name="Kelly D."/>
            <person name="Bird C."/>
            <person name="Palmer S."/>
            <person name="Gehring I."/>
            <person name="Berger A."/>
            <person name="Dooley C.M."/>
            <person name="Ersan-Urun Z."/>
            <person name="Eser C."/>
            <person name="Geiger H."/>
            <person name="Geisler M."/>
            <person name="Karotki L."/>
            <person name="Kirn A."/>
            <person name="Konantz J."/>
            <person name="Konantz M."/>
            <person name="Oberlander M."/>
            <person name="Rudolph-Geiger S."/>
            <person name="Teucke M."/>
            <person name="Lanz C."/>
            <person name="Raddatz G."/>
            <person name="Osoegawa K."/>
            <person name="Zhu B."/>
            <person name="Rapp A."/>
            <person name="Widaa S."/>
            <person name="Langford C."/>
            <person name="Yang F."/>
            <person name="Schuster S.C."/>
            <person name="Carter N.P."/>
            <person name="Harrow J."/>
            <person name="Ning Z."/>
            <person name="Herrero J."/>
            <person name="Searle S.M."/>
            <person name="Enright A."/>
            <person name="Geisler R."/>
            <person name="Plasterk R.H."/>
            <person name="Lee C."/>
            <person name="Westerfield M."/>
            <person name="de Jong P.J."/>
            <person name="Zon L.I."/>
            <person name="Postlethwait J.H."/>
            <person name="Nusslein-Volhard C."/>
            <person name="Hubbard T.J."/>
            <person name="Roest Crollius H."/>
            <person name="Rogers J."/>
            <person name="Stemple D.L."/>
        </authorList>
    </citation>
    <scope>NUCLEOTIDE SEQUENCE [LARGE SCALE GENOMIC DNA]</scope>
    <source>
        <strain>Tuebingen</strain>
    </source>
</reference>
<reference key="2">
    <citation type="journal article" date="2005" name="Mech. Dev.">
        <title>Otolith matrix proteins OMP-1 and Otolin-1 are necessary for normal otolith growth and their correct anchoring onto the sensory maculae.</title>
        <authorList>
            <person name="Murayama E."/>
            <person name="Herbomel P."/>
            <person name="Kawakami A."/>
            <person name="Takeda H."/>
            <person name="Nagasawa H."/>
        </authorList>
    </citation>
    <scope>NUCLEOTIDE SEQUENCE [MRNA] OF 1-442</scope>
    <scope>FUNCTION</scope>
    <source>
        <strain>Tuebingen</strain>
        <tissue>Inner ear</tissue>
    </source>
</reference>
<reference key="3">
    <citation type="journal article" date="2017" name="FEBS J.">
        <title>Effect of calcium ions on structure and stability of the C1q-like domain of otolin-1 from human and zebrafish.</title>
        <authorList>
            <person name="Holubowicz R."/>
            <person name="Wojtas M."/>
            <person name="Taube M."/>
            <person name="Kozak M."/>
            <person name="Ozyhar A."/>
            <person name="Dobryszycki P."/>
        </authorList>
    </citation>
    <scope>FUNCTION</scope>
    <scope>SUBUNIT</scope>
    <scope>DOMAIN</scope>
    <scope>CALCIUM-BINDING</scope>
</reference>
<keyword id="KW-0106">Calcium</keyword>
<keyword id="KW-0176">Collagen</keyword>
<keyword id="KW-1015">Disulfide bond</keyword>
<keyword id="KW-0272">Extracellular matrix</keyword>
<keyword id="KW-0325">Glycoprotein</keyword>
<keyword id="KW-0479">Metal-binding</keyword>
<keyword id="KW-1185">Reference proteome</keyword>
<keyword id="KW-0677">Repeat</keyword>
<keyword id="KW-0964">Secreted</keyword>
<keyword id="KW-0732">Signal</keyword>